<proteinExistence type="inferred from homology"/>
<comment type="function">
    <text evidence="1">Located on the platform of the 30S subunit, it bridges several disparate RNA helices of the 16S rRNA. Forms part of the Shine-Dalgarno cleft in the 70S ribosome.</text>
</comment>
<comment type="subunit">
    <text evidence="1">Part of the 30S ribosomal subunit. Interacts with proteins S7 and S18. Binds to IF-3.</text>
</comment>
<comment type="similarity">
    <text evidence="1">Belongs to the universal ribosomal protein uS11 family.</text>
</comment>
<evidence type="ECO:0000255" key="1">
    <source>
        <dbReference type="HAMAP-Rule" id="MF_01310"/>
    </source>
</evidence>
<evidence type="ECO:0000305" key="2"/>
<sequence length="129" mass="13896">MGKEATRVRRRERKNIASGVAHVNSSFNNTTITITDAQGNTIAWSSAGTMGFKGSRKSTPYAAQVAAEDVSKKAQEHGMRTLEVEVAGPGSGRESALRALQAAGFTVTSIRDVTTIPHNGCRPRKRRRV</sequence>
<gene>
    <name evidence="1" type="primary">rpsK</name>
    <name type="ordered locus">bll5377</name>
</gene>
<protein>
    <recommendedName>
        <fullName evidence="1">Small ribosomal subunit protein uS11</fullName>
    </recommendedName>
    <alternativeName>
        <fullName evidence="2">30S ribosomal protein S11</fullName>
    </alternativeName>
</protein>
<accession>P59370</accession>
<keyword id="KW-1185">Reference proteome</keyword>
<keyword id="KW-0687">Ribonucleoprotein</keyword>
<keyword id="KW-0689">Ribosomal protein</keyword>
<keyword id="KW-0694">RNA-binding</keyword>
<keyword id="KW-0699">rRNA-binding</keyword>
<organism>
    <name type="scientific">Bradyrhizobium diazoefficiens (strain JCM 10833 / BCRC 13528 / IAM 13628 / NBRC 14792 / USDA 110)</name>
    <dbReference type="NCBI Taxonomy" id="224911"/>
    <lineage>
        <taxon>Bacteria</taxon>
        <taxon>Pseudomonadati</taxon>
        <taxon>Pseudomonadota</taxon>
        <taxon>Alphaproteobacteria</taxon>
        <taxon>Hyphomicrobiales</taxon>
        <taxon>Nitrobacteraceae</taxon>
        <taxon>Bradyrhizobium</taxon>
    </lineage>
</organism>
<dbReference type="EMBL" id="BA000040">
    <property type="protein sequence ID" value="BAC50642.1"/>
    <property type="molecule type" value="Genomic_DNA"/>
</dbReference>
<dbReference type="RefSeq" id="NP_772017.1">
    <property type="nucleotide sequence ID" value="NC_004463.1"/>
</dbReference>
<dbReference type="RefSeq" id="WP_007603045.1">
    <property type="nucleotide sequence ID" value="NZ_CP011360.1"/>
</dbReference>
<dbReference type="SMR" id="P59370"/>
<dbReference type="FunCoup" id="P59370">
    <property type="interactions" value="730"/>
</dbReference>
<dbReference type="STRING" id="224911.AAV28_24295"/>
<dbReference type="EnsemblBacteria" id="BAC50642">
    <property type="protein sequence ID" value="BAC50642"/>
    <property type="gene ID" value="BAC50642"/>
</dbReference>
<dbReference type="GeneID" id="93214751"/>
<dbReference type="KEGG" id="bja:bll5377"/>
<dbReference type="PATRIC" id="fig|224911.44.peg.5276"/>
<dbReference type="eggNOG" id="COG0100">
    <property type="taxonomic scope" value="Bacteria"/>
</dbReference>
<dbReference type="HOGENOM" id="CLU_072439_5_0_5"/>
<dbReference type="InParanoid" id="P59370"/>
<dbReference type="OrthoDB" id="9806415at2"/>
<dbReference type="PhylomeDB" id="P59370"/>
<dbReference type="PRO" id="PR:P59370"/>
<dbReference type="Proteomes" id="UP000002526">
    <property type="component" value="Chromosome"/>
</dbReference>
<dbReference type="GO" id="GO:0022627">
    <property type="term" value="C:cytosolic small ribosomal subunit"/>
    <property type="evidence" value="ECO:0000318"/>
    <property type="project" value="GO_Central"/>
</dbReference>
<dbReference type="GO" id="GO:0019843">
    <property type="term" value="F:rRNA binding"/>
    <property type="evidence" value="ECO:0007669"/>
    <property type="project" value="UniProtKB-UniRule"/>
</dbReference>
<dbReference type="GO" id="GO:0003735">
    <property type="term" value="F:structural constituent of ribosome"/>
    <property type="evidence" value="ECO:0000318"/>
    <property type="project" value="GO_Central"/>
</dbReference>
<dbReference type="GO" id="GO:0006412">
    <property type="term" value="P:translation"/>
    <property type="evidence" value="ECO:0000318"/>
    <property type="project" value="GO_Central"/>
</dbReference>
<dbReference type="FunFam" id="3.30.420.80:FF:000001">
    <property type="entry name" value="30S ribosomal protein S11"/>
    <property type="match status" value="1"/>
</dbReference>
<dbReference type="Gene3D" id="3.30.420.80">
    <property type="entry name" value="Ribosomal protein S11"/>
    <property type="match status" value="1"/>
</dbReference>
<dbReference type="HAMAP" id="MF_01310">
    <property type="entry name" value="Ribosomal_uS11"/>
    <property type="match status" value="1"/>
</dbReference>
<dbReference type="InterPro" id="IPR001971">
    <property type="entry name" value="Ribosomal_uS11"/>
</dbReference>
<dbReference type="InterPro" id="IPR019981">
    <property type="entry name" value="Ribosomal_uS11_bac-type"/>
</dbReference>
<dbReference type="InterPro" id="IPR036967">
    <property type="entry name" value="Ribosomal_uS11_sf"/>
</dbReference>
<dbReference type="NCBIfam" id="NF003698">
    <property type="entry name" value="PRK05309.1"/>
    <property type="match status" value="1"/>
</dbReference>
<dbReference type="NCBIfam" id="TIGR03632">
    <property type="entry name" value="uS11_bact"/>
    <property type="match status" value="1"/>
</dbReference>
<dbReference type="PANTHER" id="PTHR11759">
    <property type="entry name" value="40S RIBOSOMAL PROTEIN S14/30S RIBOSOMAL PROTEIN S11"/>
    <property type="match status" value="1"/>
</dbReference>
<dbReference type="Pfam" id="PF00411">
    <property type="entry name" value="Ribosomal_S11"/>
    <property type="match status" value="1"/>
</dbReference>
<dbReference type="PIRSF" id="PIRSF002131">
    <property type="entry name" value="Ribosomal_S11"/>
    <property type="match status" value="1"/>
</dbReference>
<dbReference type="SUPFAM" id="SSF53137">
    <property type="entry name" value="Translational machinery components"/>
    <property type="match status" value="1"/>
</dbReference>
<reference key="1">
    <citation type="journal article" date="2002" name="DNA Res.">
        <title>Complete genomic sequence of nitrogen-fixing symbiotic bacterium Bradyrhizobium japonicum USDA110.</title>
        <authorList>
            <person name="Kaneko T."/>
            <person name="Nakamura Y."/>
            <person name="Sato S."/>
            <person name="Minamisawa K."/>
            <person name="Uchiumi T."/>
            <person name="Sasamoto S."/>
            <person name="Watanabe A."/>
            <person name="Idesawa K."/>
            <person name="Iriguchi M."/>
            <person name="Kawashima K."/>
            <person name="Kohara M."/>
            <person name="Matsumoto M."/>
            <person name="Shimpo S."/>
            <person name="Tsuruoka H."/>
            <person name="Wada T."/>
            <person name="Yamada M."/>
            <person name="Tabata S."/>
        </authorList>
    </citation>
    <scope>NUCLEOTIDE SEQUENCE [LARGE SCALE GENOMIC DNA]</scope>
    <source>
        <strain>JCM 10833 / BCRC 13528 / IAM 13628 / NBRC 14792 / USDA 110</strain>
    </source>
</reference>
<feature type="chain" id="PRO_0000123117" description="Small ribosomal subunit protein uS11">
    <location>
        <begin position="1"/>
        <end position="129"/>
    </location>
</feature>
<name>RS11_BRADU</name>